<sequence>MSQTKPRDVQVLPIGTNTTVLRSRSWTRLRFEIEYALAKGTTANSYLIQGDKLALIDPPGETFTQIYLDALQKRLDVTEINYVILGHINPNRAATLKALLEIAPQITFVCSNPGAINLRGVLENPDLPMLIMRGEETLDLGKGHNLQFIPTPNPRYADELCTYDPQTEILYTDKLFGAHICGDQVFDEGWATINEDRRYYYDCLMAPHARQVETALDKLADFPTRLYATGHGPLVRYGLIELTHAYREWSQQQTSADLTVALIYASAYGNTATLAQAIARGITKAGVAVESINCEFADPEEIRAAVEKSAGFVMGSPTLGGHAPTPVQTALGIVLSTATNNKLAGVFGSFGWSGEAVDLIESKLKDAGYRFGFDSIRVKFKPNEVTLQMCEEAGTDFAQALKKARKVRTQSVPATNVEQAVGRIVGSLCVVTAKQGEISSAMLASWVAQASFNPPGLTIAVAKDRAVETLTHTGNKFVLNVLKEGNHLGLMKHFLKPFGPAQDRFADVATAEAENGSPVLQDALAYLECSVQNRMESGDHWLVYATVENGKVLNQDGVTAVHHRKSGNHY</sequence>
<evidence type="ECO:0000250" key="1"/>
<evidence type="ECO:0000255" key="2">
    <source>
        <dbReference type="PROSITE-ProRule" id="PRU00088"/>
    </source>
</evidence>
<evidence type="ECO:0000305" key="3"/>
<feature type="chain" id="PRO_0000216798" description="Putative diflavin flavoprotein A 6">
    <location>
        <begin position="1"/>
        <end position="570"/>
    </location>
</feature>
<feature type="domain" description="Flavodoxin-like" evidence="2">
    <location>
        <begin position="260"/>
        <end position="402"/>
    </location>
</feature>
<feature type="region of interest" description="Zinc metallo-hydrolase">
    <location>
        <begin position="38"/>
        <end position="231"/>
    </location>
</feature>
<feature type="region of interest" description="Flavodoxin-reductase-like">
    <location>
        <begin position="421"/>
        <end position="570"/>
    </location>
</feature>
<reference key="1">
    <citation type="journal article" date="2001" name="DNA Res.">
        <title>Complete genomic sequence of the filamentous nitrogen-fixing cyanobacterium Anabaena sp. strain PCC 7120.</title>
        <authorList>
            <person name="Kaneko T."/>
            <person name="Nakamura Y."/>
            <person name="Wolk C.P."/>
            <person name="Kuritz T."/>
            <person name="Sasamoto S."/>
            <person name="Watanabe A."/>
            <person name="Iriguchi M."/>
            <person name="Ishikawa A."/>
            <person name="Kawashima K."/>
            <person name="Kimura T."/>
            <person name="Kishida Y."/>
            <person name="Kohara M."/>
            <person name="Matsumoto M."/>
            <person name="Matsuno A."/>
            <person name="Muraki A."/>
            <person name="Nakazaki N."/>
            <person name="Shimpo S."/>
            <person name="Sugimoto M."/>
            <person name="Takazawa M."/>
            <person name="Yamada M."/>
            <person name="Yasuda M."/>
            <person name="Tabata S."/>
        </authorList>
    </citation>
    <scope>NUCLEOTIDE SEQUENCE [LARGE SCALE GENOMIC DNA]</scope>
    <source>
        <strain>PCC 7120 / SAG 25.82 / UTEX 2576</strain>
    </source>
</reference>
<dbReference type="EC" id="1.-.-.-"/>
<dbReference type="EMBL" id="BA000019">
    <property type="protein sequence ID" value="BAB75590.1"/>
    <property type="molecule type" value="Genomic_DNA"/>
</dbReference>
<dbReference type="PIR" id="AD2292">
    <property type="entry name" value="AD2292"/>
</dbReference>
<dbReference type="RefSeq" id="WP_010998032.1">
    <property type="nucleotide sequence ID" value="NZ_RSCN01000011.1"/>
</dbReference>
<dbReference type="SMR" id="Q8YQE2"/>
<dbReference type="STRING" id="103690.gene:10495933"/>
<dbReference type="KEGG" id="ana:all3891"/>
<dbReference type="eggNOG" id="COG0426">
    <property type="taxonomic scope" value="Bacteria"/>
</dbReference>
<dbReference type="eggNOG" id="COG1853">
    <property type="taxonomic scope" value="Bacteria"/>
</dbReference>
<dbReference type="OrthoDB" id="9807946at2"/>
<dbReference type="Proteomes" id="UP000002483">
    <property type="component" value="Chromosome"/>
</dbReference>
<dbReference type="GO" id="GO:0009055">
    <property type="term" value="F:electron transfer activity"/>
    <property type="evidence" value="ECO:0007669"/>
    <property type="project" value="InterPro"/>
</dbReference>
<dbReference type="GO" id="GO:0010181">
    <property type="term" value="F:FMN binding"/>
    <property type="evidence" value="ECO:0007669"/>
    <property type="project" value="InterPro"/>
</dbReference>
<dbReference type="GO" id="GO:0016646">
    <property type="term" value="F:oxidoreductase activity, acting on the CH-NH group of donors, NAD or NADP as acceptor"/>
    <property type="evidence" value="ECO:0007669"/>
    <property type="project" value="UniProtKB-ARBA"/>
</dbReference>
<dbReference type="CDD" id="cd07709">
    <property type="entry name" value="flavodiiron_proteins_MBL-fold"/>
    <property type="match status" value="1"/>
</dbReference>
<dbReference type="Gene3D" id="3.40.50.360">
    <property type="match status" value="1"/>
</dbReference>
<dbReference type="Gene3D" id="2.30.110.10">
    <property type="entry name" value="Electron Transport, Fmn-binding Protein, Chain A"/>
    <property type="match status" value="1"/>
</dbReference>
<dbReference type="Gene3D" id="3.60.15.10">
    <property type="entry name" value="Ribonuclease Z/Hydroxyacylglutathione hydrolase-like"/>
    <property type="match status" value="1"/>
</dbReference>
<dbReference type="InterPro" id="IPR002563">
    <property type="entry name" value="Flavin_Rdtase-like_dom"/>
</dbReference>
<dbReference type="InterPro" id="IPR008254">
    <property type="entry name" value="Flavodoxin/NO_synth"/>
</dbReference>
<dbReference type="InterPro" id="IPR001226">
    <property type="entry name" value="Flavodoxin_CS"/>
</dbReference>
<dbReference type="InterPro" id="IPR029039">
    <property type="entry name" value="Flavoprotein-like_sf"/>
</dbReference>
<dbReference type="InterPro" id="IPR001279">
    <property type="entry name" value="Metallo-B-lactamas"/>
</dbReference>
<dbReference type="InterPro" id="IPR051285">
    <property type="entry name" value="NADH_oxidoreductase_modular"/>
</dbReference>
<dbReference type="InterPro" id="IPR045761">
    <property type="entry name" value="ODP_dom"/>
</dbReference>
<dbReference type="InterPro" id="IPR036866">
    <property type="entry name" value="RibonucZ/Hydroxyglut_hydro"/>
</dbReference>
<dbReference type="InterPro" id="IPR012349">
    <property type="entry name" value="Split_barrel_FMN-bd"/>
</dbReference>
<dbReference type="PANTHER" id="PTHR32145">
    <property type="entry name" value="DIFLAVIN FLAVOPROTEIN A 2-RELATED"/>
    <property type="match status" value="1"/>
</dbReference>
<dbReference type="PANTHER" id="PTHR32145:SF32">
    <property type="entry name" value="DIFLAVIN FLAVOPROTEIN A 4-RELATED"/>
    <property type="match status" value="1"/>
</dbReference>
<dbReference type="Pfam" id="PF01613">
    <property type="entry name" value="Flavin_Reduct"/>
    <property type="match status" value="1"/>
</dbReference>
<dbReference type="Pfam" id="PF00258">
    <property type="entry name" value="Flavodoxin_1"/>
    <property type="match status" value="1"/>
</dbReference>
<dbReference type="Pfam" id="PF19583">
    <property type="entry name" value="ODP"/>
    <property type="match status" value="1"/>
</dbReference>
<dbReference type="SMART" id="SM00903">
    <property type="entry name" value="Flavin_Reduct"/>
    <property type="match status" value="1"/>
</dbReference>
<dbReference type="SMART" id="SM00849">
    <property type="entry name" value="Lactamase_B"/>
    <property type="match status" value="1"/>
</dbReference>
<dbReference type="SUPFAM" id="SSF52218">
    <property type="entry name" value="Flavoproteins"/>
    <property type="match status" value="1"/>
</dbReference>
<dbReference type="SUPFAM" id="SSF50475">
    <property type="entry name" value="FMN-binding split barrel"/>
    <property type="match status" value="1"/>
</dbReference>
<dbReference type="SUPFAM" id="SSF56281">
    <property type="entry name" value="Metallo-hydrolase/oxidoreductase"/>
    <property type="match status" value="1"/>
</dbReference>
<dbReference type="PROSITE" id="PS00201">
    <property type="entry name" value="FLAVODOXIN"/>
    <property type="match status" value="1"/>
</dbReference>
<dbReference type="PROSITE" id="PS50902">
    <property type="entry name" value="FLAVODOXIN_LIKE"/>
    <property type="match status" value="1"/>
</dbReference>
<organism>
    <name type="scientific">Nostoc sp. (strain PCC 7120 / SAG 25.82 / UTEX 2576)</name>
    <dbReference type="NCBI Taxonomy" id="103690"/>
    <lineage>
        <taxon>Bacteria</taxon>
        <taxon>Bacillati</taxon>
        <taxon>Cyanobacteriota</taxon>
        <taxon>Cyanophyceae</taxon>
        <taxon>Nostocales</taxon>
        <taxon>Nostocaceae</taxon>
        <taxon>Nostoc</taxon>
    </lineage>
</organism>
<gene>
    <name type="primary">dfa6</name>
    <name type="ordered locus">all3891</name>
</gene>
<protein>
    <recommendedName>
        <fullName>Putative diflavin flavoprotein A 6</fullName>
        <ecNumber>1.-.-.-</ecNumber>
    </recommendedName>
</protein>
<accession>Q8YQE2</accession>
<comment type="function">
    <text evidence="1">Mediates electron transfer from NADH to oxygen, reducing it to water. This modular protein has 3 redox cofactors, in other organisms the same activity requires 2 or 3 proteins (By similarity).</text>
</comment>
<comment type="cofactor">
    <cofactor>
        <name>Fe cation</name>
        <dbReference type="ChEBI" id="CHEBI:24875"/>
    </cofactor>
    <text>Binds 2 iron ions per subunit.</text>
</comment>
<comment type="miscellaneous">
    <text evidence="1">By homology with NorV in E.coli, may be involved in nitric oxide detoxification.</text>
</comment>
<comment type="similarity">
    <text evidence="3">In the N-terminal section; belongs to the zinc metallo-hydrolase group 3 family.</text>
</comment>
<comment type="similarity">
    <text evidence="3">In the C-terminal section; belongs to the flavodoxin reductase family.</text>
</comment>
<keyword id="KW-0249">Electron transport</keyword>
<keyword id="KW-0560">Oxidoreductase</keyword>
<keyword id="KW-1185">Reference proteome</keyword>
<keyword id="KW-0813">Transport</keyword>
<name>DFA6_NOSS1</name>
<proteinExistence type="inferred from homology"/>